<organism>
    <name type="scientific">Candida albicans (strain SC5314 / ATCC MYA-2876)</name>
    <name type="common">Yeast</name>
    <dbReference type="NCBI Taxonomy" id="237561"/>
    <lineage>
        <taxon>Eukaryota</taxon>
        <taxon>Fungi</taxon>
        <taxon>Dikarya</taxon>
        <taxon>Ascomycota</taxon>
        <taxon>Saccharomycotina</taxon>
        <taxon>Pichiomycetes</taxon>
        <taxon>Debaryomycetaceae</taxon>
        <taxon>Candida/Lodderomyces clade</taxon>
        <taxon>Candida</taxon>
    </lineage>
</organism>
<gene>
    <name type="primary">MBF1</name>
    <name type="ordered locus">CAALFM_C101060WA</name>
    <name type="ORF">CaO19.10804</name>
    <name type="ORF">CaO19.3294</name>
</gene>
<proteinExistence type="inferred from homology"/>
<keyword id="KW-0010">Activator</keyword>
<keyword id="KW-0238">DNA-binding</keyword>
<keyword id="KW-1185">Reference proteome</keyword>
<keyword id="KW-0804">Transcription</keyword>
<keyword id="KW-0805">Transcription regulation</keyword>
<sequence length="151" mass="16292">MSSDWDSVTIIGQKARVGGGGPRENVAKTSSQLNAARRAGLVVGTEKKYGTANTKSNPEGQRLTKLDATDDVVAVKKVDVSVGKAIQQARQEKKLTQKELATKVNEKPNVINDYEAGRAIPNQQLLAKLERALGVKLRGKNIGEPLFAKKK</sequence>
<reference key="1">
    <citation type="journal article" date="2004" name="Proc. Natl. Acad. Sci. U.S.A.">
        <title>The diploid genome sequence of Candida albicans.</title>
        <authorList>
            <person name="Jones T."/>
            <person name="Federspiel N.A."/>
            <person name="Chibana H."/>
            <person name="Dungan J."/>
            <person name="Kalman S."/>
            <person name="Magee B.B."/>
            <person name="Newport G."/>
            <person name="Thorstenson Y.R."/>
            <person name="Agabian N."/>
            <person name="Magee P.T."/>
            <person name="Davis R.W."/>
            <person name="Scherer S."/>
        </authorList>
    </citation>
    <scope>NUCLEOTIDE SEQUENCE [LARGE SCALE GENOMIC DNA]</scope>
    <source>
        <strain>SC5314 / ATCC MYA-2876</strain>
    </source>
</reference>
<reference key="2">
    <citation type="journal article" date="2007" name="Genome Biol.">
        <title>Assembly of the Candida albicans genome into sixteen supercontigs aligned on the eight chromosomes.</title>
        <authorList>
            <person name="van het Hoog M."/>
            <person name="Rast T.J."/>
            <person name="Martchenko M."/>
            <person name="Grindle S."/>
            <person name="Dignard D."/>
            <person name="Hogues H."/>
            <person name="Cuomo C."/>
            <person name="Berriman M."/>
            <person name="Scherer S."/>
            <person name="Magee B.B."/>
            <person name="Whiteway M."/>
            <person name="Chibana H."/>
            <person name="Nantel A."/>
            <person name="Magee P.T."/>
        </authorList>
    </citation>
    <scope>GENOME REANNOTATION</scope>
    <source>
        <strain>SC5314 / ATCC MYA-2876</strain>
    </source>
</reference>
<reference key="3">
    <citation type="journal article" date="2013" name="Genome Biol.">
        <title>Assembly of a phased diploid Candida albicans genome facilitates allele-specific measurements and provides a simple model for repeat and indel structure.</title>
        <authorList>
            <person name="Muzzey D."/>
            <person name="Schwartz K."/>
            <person name="Weissman J.S."/>
            <person name="Sherlock G."/>
        </authorList>
    </citation>
    <scope>NUCLEOTIDE SEQUENCE [LARGE SCALE GENOMIC DNA]</scope>
    <scope>GENOME REANNOTATION</scope>
    <source>
        <strain>SC5314 / ATCC MYA-2876</strain>
    </source>
</reference>
<protein>
    <recommendedName>
        <fullName>Multiprotein-bridging factor 1</fullName>
    </recommendedName>
</protein>
<evidence type="ECO:0000250" key="1">
    <source>
        <dbReference type="UniProtKB" id="O14467"/>
    </source>
</evidence>
<evidence type="ECO:0000255" key="2">
    <source>
        <dbReference type="PROSITE-ProRule" id="PRU00257"/>
    </source>
</evidence>
<evidence type="ECO:0000256" key="3">
    <source>
        <dbReference type="SAM" id="MobiDB-lite"/>
    </source>
</evidence>
<evidence type="ECO:0000305" key="4"/>
<accession>Q5A940</accession>
<accession>A0A1D8PCE8</accession>
<feature type="chain" id="PRO_0000149803" description="Multiprotein-bridging factor 1">
    <location>
        <begin position="1"/>
        <end position="151"/>
    </location>
</feature>
<feature type="domain" description="HTH cro/C1-type" evidence="2">
    <location>
        <begin position="86"/>
        <end position="140"/>
    </location>
</feature>
<feature type="DNA-binding region" description="H-T-H motif" evidence="2">
    <location>
        <begin position="97"/>
        <end position="116"/>
    </location>
</feature>
<feature type="region of interest" description="Disordered" evidence="3">
    <location>
        <begin position="1"/>
        <end position="32"/>
    </location>
</feature>
<name>MBF1_CANAL</name>
<comment type="function">
    <text evidence="1">Transcriptional coactivator that stimulates GCN4-dependent transcriptional activity by bridging the DNA-binding region of GCN4 and TBP (SPT15), thereby recruiting TBP to GCN4-bound promoters. Involved in induction of the ribosome quality control (RQC) pathway; a pathway that degrades nascent peptide chains during problematic translation. Required to prevent stalled ribosomes from frameshifting.</text>
</comment>
<comment type="similarity">
    <text evidence="4">Belongs to the MBF1 family.</text>
</comment>
<dbReference type="EMBL" id="CP017623">
    <property type="protein sequence ID" value="AOW25802.1"/>
    <property type="molecule type" value="Genomic_DNA"/>
</dbReference>
<dbReference type="RefSeq" id="XP_718117.1">
    <property type="nucleotide sequence ID" value="XM_713024.2"/>
</dbReference>
<dbReference type="SMR" id="Q5A940"/>
<dbReference type="FunCoup" id="Q5A940">
    <property type="interactions" value="803"/>
</dbReference>
<dbReference type="STRING" id="237561.Q5A940"/>
<dbReference type="EnsemblFungi" id="C1_01060W_A-T">
    <property type="protein sequence ID" value="C1_01060W_A-T-p1"/>
    <property type="gene ID" value="C1_01060W_A"/>
</dbReference>
<dbReference type="GeneID" id="3640171"/>
<dbReference type="KEGG" id="cal:CAALFM_C101060WA"/>
<dbReference type="CGD" id="CAL0000194672">
    <property type="gene designation" value="MBF1"/>
</dbReference>
<dbReference type="VEuPathDB" id="FungiDB:C1_01060W_A"/>
<dbReference type="eggNOG" id="KOG3398">
    <property type="taxonomic scope" value="Eukaryota"/>
</dbReference>
<dbReference type="HOGENOM" id="CLU_112609_0_1_1"/>
<dbReference type="InParanoid" id="Q5A940"/>
<dbReference type="OMA" id="GKNKSCK"/>
<dbReference type="OrthoDB" id="10253401at2759"/>
<dbReference type="PRO" id="PR:Q5A940"/>
<dbReference type="Proteomes" id="UP000000559">
    <property type="component" value="Chromosome 1"/>
</dbReference>
<dbReference type="GO" id="GO:0005737">
    <property type="term" value="C:cytoplasm"/>
    <property type="evidence" value="ECO:0000314"/>
    <property type="project" value="CGD"/>
</dbReference>
<dbReference type="GO" id="GO:0005634">
    <property type="term" value="C:nucleus"/>
    <property type="evidence" value="ECO:0000318"/>
    <property type="project" value="GO_Central"/>
</dbReference>
<dbReference type="GO" id="GO:0003677">
    <property type="term" value="F:DNA binding"/>
    <property type="evidence" value="ECO:0007669"/>
    <property type="project" value="UniProtKB-KW"/>
</dbReference>
<dbReference type="GO" id="GO:0043022">
    <property type="term" value="F:ribosome binding"/>
    <property type="evidence" value="ECO:0007669"/>
    <property type="project" value="EnsemblFungi"/>
</dbReference>
<dbReference type="GO" id="GO:0003713">
    <property type="term" value="F:transcription coactivator activity"/>
    <property type="evidence" value="ECO:0000315"/>
    <property type="project" value="CGD"/>
</dbReference>
<dbReference type="GO" id="GO:0006995">
    <property type="term" value="P:cellular response to nitrogen starvation"/>
    <property type="evidence" value="ECO:0000315"/>
    <property type="project" value="CGD"/>
</dbReference>
<dbReference type="GO" id="GO:0140469">
    <property type="term" value="P:GCN2-mediated signaling"/>
    <property type="evidence" value="ECO:0007669"/>
    <property type="project" value="EnsemblFungi"/>
</dbReference>
<dbReference type="GO" id="GO:1990145">
    <property type="term" value="P:maintenance of translational fidelity"/>
    <property type="evidence" value="ECO:0007669"/>
    <property type="project" value="EnsemblFungi"/>
</dbReference>
<dbReference type="GO" id="GO:0072344">
    <property type="term" value="P:rescue of stalled ribosome"/>
    <property type="evidence" value="ECO:0007669"/>
    <property type="project" value="EnsemblFungi"/>
</dbReference>
<dbReference type="CDD" id="cd00093">
    <property type="entry name" value="HTH_XRE"/>
    <property type="match status" value="1"/>
</dbReference>
<dbReference type="FunFam" id="1.10.260.40:FF:000015">
    <property type="entry name" value="Endothelial differentiation-related factor 1"/>
    <property type="match status" value="1"/>
</dbReference>
<dbReference type="Gene3D" id="1.10.260.40">
    <property type="entry name" value="lambda repressor-like DNA-binding domains"/>
    <property type="match status" value="1"/>
</dbReference>
<dbReference type="InterPro" id="IPR001387">
    <property type="entry name" value="Cro/C1-type_HTH"/>
</dbReference>
<dbReference type="InterPro" id="IPR010982">
    <property type="entry name" value="Lambda_DNA-bd_dom_sf"/>
</dbReference>
<dbReference type="InterPro" id="IPR013729">
    <property type="entry name" value="MBF1_N"/>
</dbReference>
<dbReference type="PANTHER" id="PTHR10245:SF15">
    <property type="entry name" value="ENDOTHELIAL DIFFERENTIATION-RELATED FACTOR 1"/>
    <property type="match status" value="1"/>
</dbReference>
<dbReference type="PANTHER" id="PTHR10245">
    <property type="entry name" value="ENDOTHELIAL DIFFERENTIATION-RELATED FACTOR 1 MULTIPROTEIN BRIDGING FACTOR 1"/>
    <property type="match status" value="1"/>
</dbReference>
<dbReference type="Pfam" id="PF01381">
    <property type="entry name" value="HTH_3"/>
    <property type="match status" value="1"/>
</dbReference>
<dbReference type="Pfam" id="PF08523">
    <property type="entry name" value="MBF1"/>
    <property type="match status" value="1"/>
</dbReference>
<dbReference type="SMART" id="SM00530">
    <property type="entry name" value="HTH_XRE"/>
    <property type="match status" value="1"/>
</dbReference>
<dbReference type="SUPFAM" id="SSF47413">
    <property type="entry name" value="lambda repressor-like DNA-binding domains"/>
    <property type="match status" value="1"/>
</dbReference>
<dbReference type="PROSITE" id="PS50943">
    <property type="entry name" value="HTH_CROC1"/>
    <property type="match status" value="1"/>
</dbReference>